<reference key="1">
    <citation type="journal article" date="2022" name="J. Infect. Dis.">
        <title>Exportation of Monkeypox virus from the African continent.</title>
        <authorList>
            <person name="Mauldin M.R."/>
            <person name="McCollum A.M."/>
            <person name="Nakazawa Y.J."/>
            <person name="Mandra A."/>
            <person name="Whitehouse E.R."/>
            <person name="Davidson W."/>
            <person name="Zhao H."/>
            <person name="Gao J."/>
            <person name="Li Y."/>
            <person name="Doty J."/>
            <person name="Yinka-Ogunleye A."/>
            <person name="Akinpelu A."/>
            <person name="Aruna O."/>
            <person name="Naidoo D."/>
            <person name="Lewandowski K."/>
            <person name="Afrough B."/>
            <person name="Graham V."/>
            <person name="Aarons E."/>
            <person name="Hewson R."/>
            <person name="Vipond R."/>
            <person name="Dunning J."/>
            <person name="Chand M."/>
            <person name="Brown C."/>
            <person name="Cohen-Gihon I."/>
            <person name="Erez N."/>
            <person name="Shifman O."/>
            <person name="Israeli O."/>
            <person name="Sharon M."/>
            <person name="Schwartz E."/>
            <person name="Beth-Din A."/>
            <person name="Zvi A."/>
            <person name="Mak T.M."/>
            <person name="Ng Y.K."/>
            <person name="Cui L."/>
            <person name="Lin R.T.P."/>
            <person name="Olson V.A."/>
            <person name="Brooks T."/>
            <person name="Paran N."/>
            <person name="Ihekweazu C."/>
            <person name="Reynolds M.G."/>
        </authorList>
    </citation>
    <scope>NUCLEOTIDE SEQUENCE [LARGE SCALE GENOMIC DNA]</scope>
    <source>
        <strain>MPXV-M5312_HM12_Rivers</strain>
    </source>
</reference>
<comment type="function">
    <text evidence="1">Substrate-specific adapter of SKP1-containing E3 ubiquitin-protein ligases which mediate the ubiquitination and subsequent proteasomal degradation of host target proteins. Prevents activation and subsequent nuclear localization of NF-kappa-B in infected cells, by targeting NF-kappa-B RELA subunit to the SCF E3 ligase complex.</text>
</comment>
<comment type="subunit">
    <text evidence="1">Interacts (via N-terminus) with host RELA. Interacts (via PRANC/F-box-like domain) with the SKP1 component of the host SCF ubiquitin ligase complex.</text>
</comment>
<comment type="similarity">
    <text evidence="3">Belongs to the orthopoxvirus OPG023 family.</text>
</comment>
<proteinExistence type="inferred from homology"/>
<gene>
    <name type="primary">OPG023</name>
    <name type="ORF">MPXVgp011</name>
</gene>
<organismHost>
    <name type="scientific">Cynomys gunnisoni</name>
    <name type="common">Gunnison's prairie dog</name>
    <name type="synonym">Spermophilus gunnisoni</name>
    <dbReference type="NCBI Taxonomy" id="45479"/>
</organismHost>
<organismHost>
    <name type="scientific">Cynomys leucurus</name>
    <name type="common">White-tailed prairie dog</name>
    <dbReference type="NCBI Taxonomy" id="99825"/>
</organismHost>
<organismHost>
    <name type="scientific">Cynomys ludovicianus</name>
    <name type="common">Black-tailed prairie dog</name>
    <dbReference type="NCBI Taxonomy" id="45480"/>
</organismHost>
<organismHost>
    <name type="scientific">Cynomys mexicanus</name>
    <name type="common">Mexican prairie dog</name>
    <dbReference type="NCBI Taxonomy" id="99826"/>
</organismHost>
<organismHost>
    <name type="scientific">Cynomys parvidens</name>
    <name type="common">Utah prairie dog</name>
    <dbReference type="NCBI Taxonomy" id="99827"/>
</organismHost>
<organismHost>
    <name type="scientific">Gliridae</name>
    <name type="common">dormice</name>
    <dbReference type="NCBI Taxonomy" id="30650"/>
</organismHost>
<organismHost>
    <name type="scientific">Heliosciurus ruwenzorii</name>
    <name type="common">Ruwenzori sun squirrel</name>
    <dbReference type="NCBI Taxonomy" id="226685"/>
</organismHost>
<organismHost>
    <name type="scientific">Homo sapiens</name>
    <name type="common">Human</name>
    <dbReference type="NCBI Taxonomy" id="9606"/>
</organismHost>
<organismHost>
    <name type="scientific">Mus musculus</name>
    <name type="common">Mouse</name>
    <dbReference type="NCBI Taxonomy" id="10090"/>
</organismHost>
<protein>
    <recommendedName>
        <fullName>Ankyrin repeat domain-containing protein OPG023</fullName>
    </recommendedName>
    <alternativeName>
        <fullName>Host range protein 1</fullName>
    </alternativeName>
</protein>
<feature type="chain" id="PRO_0000457190" description="Ankyrin repeat domain-containing protein OPG023">
    <location>
        <begin position="1"/>
        <end position="660"/>
    </location>
</feature>
<feature type="repeat" description="ANK 1" evidence="2">
    <location>
        <begin position="31"/>
        <end position="64"/>
    </location>
</feature>
<feature type="repeat" description="ANK 2" evidence="2">
    <location>
        <begin position="101"/>
        <end position="131"/>
    </location>
</feature>
<feature type="repeat" description="ANK 3" evidence="2">
    <location>
        <begin position="135"/>
        <end position="166"/>
    </location>
</feature>
<feature type="repeat" description="ANK 4" evidence="2">
    <location>
        <begin position="190"/>
        <end position="222"/>
    </location>
</feature>
<feature type="repeat" description="ANK 5" evidence="2">
    <location>
        <begin position="226"/>
        <end position="257"/>
    </location>
</feature>
<feature type="repeat" description="ANK 6" evidence="2">
    <location>
        <begin position="268"/>
        <end position="302"/>
    </location>
</feature>
<feature type="repeat" description="ANK 7" evidence="2">
    <location>
        <begin position="325"/>
        <end position="359"/>
    </location>
</feature>
<feature type="repeat" description="ANK 8" evidence="2">
    <location>
        <begin position="449"/>
        <end position="478"/>
    </location>
</feature>
<feature type="repeat" description="ANK 9" evidence="2">
    <location>
        <begin position="482"/>
        <end position="512"/>
    </location>
</feature>
<feature type="region of interest" description="PRANC/F-box-like" evidence="1">
    <location>
        <begin position="578"/>
        <end position="658"/>
    </location>
</feature>
<evidence type="ECO:0000250" key="1">
    <source>
        <dbReference type="UniProtKB" id="Q8QN36"/>
    </source>
</evidence>
<evidence type="ECO:0000255" key="2"/>
<evidence type="ECO:0000305" key="3"/>
<evidence type="ECO:0000312" key="4">
    <source>
        <dbReference type="EMBL" id="QNP12882.1"/>
    </source>
</evidence>
<evidence type="ECO:0000312" key="5">
    <source>
        <dbReference type="Proteomes" id="UP000516359"/>
    </source>
</evidence>
<organism evidence="4 5">
    <name type="scientific">Monkeypox virus</name>
    <dbReference type="NCBI Taxonomy" id="10244"/>
    <lineage>
        <taxon>Viruses</taxon>
        <taxon>Varidnaviria</taxon>
        <taxon>Bamfordvirae</taxon>
        <taxon>Nucleocytoviricota</taxon>
        <taxon>Pokkesviricetes</taxon>
        <taxon>Chitovirales</taxon>
        <taxon>Poxviridae</taxon>
        <taxon>Chordopoxvirinae</taxon>
        <taxon>Orthopoxvirus</taxon>
    </lineage>
</organism>
<sequence>MFDYLENEEVVLDELKQMLRDRDPNDTRNQFKNNALHAYLFNEHCNNVEVVKLLLDSGTNPLHKNWRQFTPIEEYTNSRHVKVNKDIAMALLEATGYSNINDFNIFSYMKSKNVDVDLIKVLVEHGFDLSVKCENHRSVIENYVMTDDPVPEIIDLFIENGCSVLYEDDEYGYVYDDYQPRNCGTVLHLYIIAHLYSESDTRAYVRPEVVKCLINHGIKPSSIDKNYCTALQYYIKSSHIDIDIVKLLMKGIDNTAYSYIDDLTCCTRGIMADYLNSDYRYNKDVDLDLVKLFLENGKPYGIMCSIVPLWRNDKETISLILKTMNSDVLQHILIEYMTFGDIDIPLVECMLEYGAVVNKEAIHRYFRNINIDSYTMKYLLKKEGGDAVNHLDDGEIPIGHLCESNYGCYNFYTYTYKKGLCDMSYVCPILSTINICLPYLKDINMIDKRGETLLHKAVRYNKQSLVSLLLESGSDVNIRSNNGYTCITIAINESRNIELLKMLLCHKPTLDCVIDSLSEVSNIVDNAYAIKQCIKYTMIIDDCTSSKIPESISQRYNDYIDLCNQELNEMKKIMVGGNTMFSLIFTEHGAKIIHRYANNPELRAYYESKQNKIYVEAYDIISDAIVKHNKIHKTIIKSVDDNTYISNLPYTIKYKIFEQQ</sequence>
<accession>A0A7H0DMZ9</accession>
<dbReference type="EMBL" id="MT903340">
    <property type="protein sequence ID" value="QNP12882.1"/>
    <property type="molecule type" value="Genomic_DNA"/>
</dbReference>
<dbReference type="RefSeq" id="YP_010377009.1">
    <property type="nucleotide sequence ID" value="NC_063383.1"/>
</dbReference>
<dbReference type="SMR" id="A0A7H0DMZ9"/>
<dbReference type="GeneID" id="72551424"/>
<dbReference type="Proteomes" id="UP000516359">
    <property type="component" value="Genome"/>
</dbReference>
<dbReference type="GO" id="GO:0044071">
    <property type="term" value="P:symbiont-mediated perturbation of host cell cycle progression"/>
    <property type="evidence" value="ECO:0007669"/>
    <property type="project" value="UniProtKB-KW"/>
</dbReference>
<dbReference type="GO" id="GO:0039648">
    <property type="term" value="P:symbiont-mediated perturbation of host ubiquitin-like protein modification"/>
    <property type="evidence" value="ECO:0007669"/>
    <property type="project" value="UniProtKB-KW"/>
</dbReference>
<dbReference type="GO" id="GO:0085034">
    <property type="term" value="P:symbiont-mediated suppression of host NF-kappaB cascade"/>
    <property type="evidence" value="ECO:0007669"/>
    <property type="project" value="UniProtKB-KW"/>
</dbReference>
<dbReference type="Gene3D" id="1.25.40.20">
    <property type="entry name" value="Ankyrin repeat-containing domain"/>
    <property type="match status" value="3"/>
</dbReference>
<dbReference type="InterPro" id="IPR002110">
    <property type="entry name" value="Ankyrin_rpt"/>
</dbReference>
<dbReference type="InterPro" id="IPR036770">
    <property type="entry name" value="Ankyrin_rpt-contain_sf"/>
</dbReference>
<dbReference type="InterPro" id="IPR051165">
    <property type="entry name" value="Multifunctional_ANK_Repeat"/>
</dbReference>
<dbReference type="PANTHER" id="PTHR24123">
    <property type="entry name" value="ANKYRIN REPEAT-CONTAINING"/>
    <property type="match status" value="1"/>
</dbReference>
<dbReference type="PANTHER" id="PTHR24123:SF33">
    <property type="entry name" value="PROTEIN HOS4"/>
    <property type="match status" value="1"/>
</dbReference>
<dbReference type="Pfam" id="PF00023">
    <property type="entry name" value="Ank"/>
    <property type="match status" value="1"/>
</dbReference>
<dbReference type="Pfam" id="PF12796">
    <property type="entry name" value="Ank_2"/>
    <property type="match status" value="1"/>
</dbReference>
<dbReference type="SMART" id="SM00248">
    <property type="entry name" value="ANK"/>
    <property type="match status" value="8"/>
</dbReference>
<dbReference type="SUPFAM" id="SSF48403">
    <property type="entry name" value="Ankyrin repeat"/>
    <property type="match status" value="1"/>
</dbReference>
<dbReference type="PROSITE" id="PS50297">
    <property type="entry name" value="ANK_REP_REGION"/>
    <property type="match status" value="2"/>
</dbReference>
<dbReference type="PROSITE" id="PS50088">
    <property type="entry name" value="ANK_REPEAT"/>
    <property type="match status" value="1"/>
</dbReference>
<name>PG023_MONPV</name>
<keyword id="KW-0040">ANK repeat</keyword>
<keyword id="KW-0945">Host-virus interaction</keyword>
<keyword id="KW-1100">Inhibition of host NF-kappa-B by virus</keyword>
<keyword id="KW-1121">Modulation of host cell cycle by virus</keyword>
<keyword id="KW-1123">Modulation of host E3 ubiquitin ligases by virus</keyword>
<keyword id="KW-1130">Modulation of host ubiquitin pathway by virus</keyword>
<keyword id="KW-1185">Reference proteome</keyword>
<keyword id="KW-0677">Repeat</keyword>
<keyword id="KW-0833">Ubl conjugation pathway</keyword>